<dbReference type="EC" id="2.7.1.40"/>
<dbReference type="EMBL" id="X74944">
    <property type="protein sequence ID" value="CAA52898.2"/>
    <property type="molecule type" value="Genomic_DNA"/>
</dbReference>
<dbReference type="PDB" id="1PKL">
    <property type="method" value="X-ray"/>
    <property type="resolution" value="2.35 A"/>
    <property type="chains" value="A/B/C/D/E/F/G/H=1-499"/>
</dbReference>
<dbReference type="PDB" id="3E0V">
    <property type="method" value="X-ray"/>
    <property type="resolution" value="3.30 A"/>
    <property type="chains" value="A/B/C/D/E/F=1-499"/>
</dbReference>
<dbReference type="PDB" id="3E0W">
    <property type="method" value="X-ray"/>
    <property type="resolution" value="3.10 A"/>
    <property type="chains" value="A=1-499"/>
</dbReference>
<dbReference type="PDB" id="3HQN">
    <property type="method" value="X-ray"/>
    <property type="resolution" value="2.00 A"/>
    <property type="chains" value="A/D=1-499"/>
</dbReference>
<dbReference type="PDB" id="3HQO">
    <property type="method" value="X-ray"/>
    <property type="resolution" value="3.40 A"/>
    <property type="chains" value="A/B/C/K=1-499"/>
</dbReference>
<dbReference type="PDB" id="3HQP">
    <property type="method" value="X-ray"/>
    <property type="resolution" value="2.30 A"/>
    <property type="chains" value="A/B/C/D/E/F/G/H/I/J/K/L/M/N/O/P=1-499"/>
</dbReference>
<dbReference type="PDB" id="3HQQ">
    <property type="method" value="X-ray"/>
    <property type="resolution" value="5.07 A"/>
    <property type="chains" value="A/B/C/D/E/F/G/H/I/J/K/L/M/N/O/P/Q/R/S/T/U/V/W/X=1-499"/>
</dbReference>
<dbReference type="PDB" id="3IS4">
    <property type="method" value="X-ray"/>
    <property type="resolution" value="2.10 A"/>
    <property type="chains" value="A/B=1-499"/>
</dbReference>
<dbReference type="PDB" id="3KTX">
    <property type="method" value="X-ray"/>
    <property type="resolution" value="2.10 A"/>
    <property type="chains" value="A/B=1-499"/>
</dbReference>
<dbReference type="PDB" id="3PP7">
    <property type="method" value="X-ray"/>
    <property type="resolution" value="2.35 A"/>
    <property type="chains" value="A/B=2-499"/>
</dbReference>
<dbReference type="PDB" id="3QV6">
    <property type="method" value="X-ray"/>
    <property type="resolution" value="2.85 A"/>
    <property type="chains" value="A/D=1-499"/>
</dbReference>
<dbReference type="PDB" id="3QV7">
    <property type="method" value="X-ray"/>
    <property type="resolution" value="2.70 A"/>
    <property type="chains" value="A/B/C/D=1-499"/>
</dbReference>
<dbReference type="PDB" id="3QV8">
    <property type="method" value="X-ray"/>
    <property type="resolution" value="2.45 A"/>
    <property type="chains" value="A/D=1-499"/>
</dbReference>
<dbReference type="PDB" id="3SRK">
    <property type="method" value="X-ray"/>
    <property type="resolution" value="2.65 A"/>
    <property type="chains" value="A/B=1-499"/>
</dbReference>
<dbReference type="PDBsum" id="1PKL"/>
<dbReference type="PDBsum" id="3E0V"/>
<dbReference type="PDBsum" id="3E0W"/>
<dbReference type="PDBsum" id="3HQN"/>
<dbReference type="PDBsum" id="3HQO"/>
<dbReference type="PDBsum" id="3HQP"/>
<dbReference type="PDBsum" id="3HQQ"/>
<dbReference type="PDBsum" id="3IS4"/>
<dbReference type="PDBsum" id="3KTX"/>
<dbReference type="PDBsum" id="3PP7"/>
<dbReference type="PDBsum" id="3QV6"/>
<dbReference type="PDBsum" id="3QV7"/>
<dbReference type="PDBsum" id="3QV8"/>
<dbReference type="PDBsum" id="3SRK"/>
<dbReference type="SMR" id="Q27686"/>
<dbReference type="BindingDB" id="Q27686"/>
<dbReference type="ChEMBL" id="CHEMBL5149"/>
<dbReference type="VEuPathDB" id="TriTrypDB:LmxM.34.0030"/>
<dbReference type="BRENDA" id="2.7.1.40">
    <property type="organism ID" value="2951"/>
</dbReference>
<dbReference type="UniPathway" id="UPA00109">
    <property type="reaction ID" value="UER00188"/>
</dbReference>
<dbReference type="EvolutionaryTrace" id="Q27686"/>
<dbReference type="GO" id="GO:0005524">
    <property type="term" value="F:ATP binding"/>
    <property type="evidence" value="ECO:0007669"/>
    <property type="project" value="UniProtKB-KW"/>
</dbReference>
<dbReference type="GO" id="GO:0016301">
    <property type="term" value="F:kinase activity"/>
    <property type="evidence" value="ECO:0007669"/>
    <property type="project" value="UniProtKB-KW"/>
</dbReference>
<dbReference type="GO" id="GO:0000287">
    <property type="term" value="F:magnesium ion binding"/>
    <property type="evidence" value="ECO:0007669"/>
    <property type="project" value="InterPro"/>
</dbReference>
<dbReference type="GO" id="GO:0030955">
    <property type="term" value="F:potassium ion binding"/>
    <property type="evidence" value="ECO:0007669"/>
    <property type="project" value="InterPro"/>
</dbReference>
<dbReference type="GO" id="GO:0004743">
    <property type="term" value="F:pyruvate kinase activity"/>
    <property type="evidence" value="ECO:0007669"/>
    <property type="project" value="UniProtKB-EC"/>
</dbReference>
<dbReference type="CDD" id="cd00288">
    <property type="entry name" value="Pyruvate_Kinase"/>
    <property type="match status" value="1"/>
</dbReference>
<dbReference type="FunFam" id="2.40.33.10:FF:000001">
    <property type="entry name" value="Pyruvate kinase"/>
    <property type="match status" value="1"/>
</dbReference>
<dbReference type="FunFam" id="3.20.20.60:FF:000001">
    <property type="entry name" value="Pyruvate kinase"/>
    <property type="match status" value="1"/>
</dbReference>
<dbReference type="FunFam" id="3.40.1380.20:FF:000024">
    <property type="entry name" value="Pyruvate kinase"/>
    <property type="match status" value="1"/>
</dbReference>
<dbReference type="Gene3D" id="3.20.20.60">
    <property type="entry name" value="Phosphoenolpyruvate-binding domains"/>
    <property type="match status" value="1"/>
</dbReference>
<dbReference type="Gene3D" id="2.40.33.10">
    <property type="entry name" value="PK beta-barrel domain-like"/>
    <property type="match status" value="1"/>
</dbReference>
<dbReference type="Gene3D" id="3.40.1380.20">
    <property type="entry name" value="Pyruvate kinase, C-terminal domain"/>
    <property type="match status" value="1"/>
</dbReference>
<dbReference type="InterPro" id="IPR001697">
    <property type="entry name" value="Pyr_Knase"/>
</dbReference>
<dbReference type="InterPro" id="IPR015813">
    <property type="entry name" value="Pyrv/PenolPyrv_kinase-like_dom"/>
</dbReference>
<dbReference type="InterPro" id="IPR040442">
    <property type="entry name" value="Pyrv_kinase-like_dom_sf"/>
</dbReference>
<dbReference type="InterPro" id="IPR011037">
    <property type="entry name" value="Pyrv_Knase-like_insert_dom_sf"/>
</dbReference>
<dbReference type="InterPro" id="IPR018209">
    <property type="entry name" value="Pyrv_Knase_AS"/>
</dbReference>
<dbReference type="InterPro" id="IPR015793">
    <property type="entry name" value="Pyrv_Knase_brl"/>
</dbReference>
<dbReference type="InterPro" id="IPR015795">
    <property type="entry name" value="Pyrv_Knase_C"/>
</dbReference>
<dbReference type="InterPro" id="IPR036918">
    <property type="entry name" value="Pyrv_Knase_C_sf"/>
</dbReference>
<dbReference type="InterPro" id="IPR015806">
    <property type="entry name" value="Pyrv_Knase_insert_dom_sf"/>
</dbReference>
<dbReference type="NCBIfam" id="NF004491">
    <property type="entry name" value="PRK05826.1"/>
    <property type="match status" value="1"/>
</dbReference>
<dbReference type="NCBIfam" id="NF004978">
    <property type="entry name" value="PRK06354.1"/>
    <property type="match status" value="1"/>
</dbReference>
<dbReference type="NCBIfam" id="TIGR01064">
    <property type="entry name" value="pyruv_kin"/>
    <property type="match status" value="1"/>
</dbReference>
<dbReference type="PANTHER" id="PTHR11817">
    <property type="entry name" value="PYRUVATE KINASE"/>
    <property type="match status" value="1"/>
</dbReference>
<dbReference type="Pfam" id="PF00224">
    <property type="entry name" value="PK"/>
    <property type="match status" value="1"/>
</dbReference>
<dbReference type="Pfam" id="PF02887">
    <property type="entry name" value="PK_C"/>
    <property type="match status" value="1"/>
</dbReference>
<dbReference type="PRINTS" id="PR01050">
    <property type="entry name" value="PYRUVTKNASE"/>
</dbReference>
<dbReference type="SUPFAM" id="SSF51621">
    <property type="entry name" value="Phosphoenolpyruvate/pyruvate domain"/>
    <property type="match status" value="1"/>
</dbReference>
<dbReference type="SUPFAM" id="SSF50800">
    <property type="entry name" value="PK beta-barrel domain-like"/>
    <property type="match status" value="1"/>
</dbReference>
<dbReference type="SUPFAM" id="SSF52935">
    <property type="entry name" value="PK C-terminal domain-like"/>
    <property type="match status" value="1"/>
</dbReference>
<dbReference type="PROSITE" id="PS00110">
    <property type="entry name" value="PYRUVATE_KINASE"/>
    <property type="match status" value="1"/>
</dbReference>
<comment type="catalytic activity">
    <reaction>
        <text>pyruvate + ATP = phosphoenolpyruvate + ADP + H(+)</text>
        <dbReference type="Rhea" id="RHEA:18157"/>
        <dbReference type="ChEBI" id="CHEBI:15361"/>
        <dbReference type="ChEBI" id="CHEBI:15378"/>
        <dbReference type="ChEBI" id="CHEBI:30616"/>
        <dbReference type="ChEBI" id="CHEBI:58702"/>
        <dbReference type="ChEBI" id="CHEBI:456216"/>
        <dbReference type="EC" id="2.7.1.40"/>
    </reaction>
</comment>
<comment type="cofactor">
    <cofactor>
        <name>Mg(2+)</name>
        <dbReference type="ChEBI" id="CHEBI:18420"/>
    </cofactor>
</comment>
<comment type="cofactor">
    <cofactor>
        <name>K(+)</name>
        <dbReference type="ChEBI" id="CHEBI:29103"/>
    </cofactor>
</comment>
<comment type="activity regulation">
    <text>Activated by fructose 2,6-bisphosphate, activated by the effector in a non cooperative manner.</text>
</comment>
<comment type="pathway">
    <text>Carbohydrate degradation; glycolysis; pyruvate from D-glyceraldehyde 3-phosphate: step 5/5.</text>
</comment>
<comment type="subunit">
    <text>Homotetramer.</text>
</comment>
<comment type="similarity">
    <text evidence="3">Belongs to the pyruvate kinase family.</text>
</comment>
<keyword id="KW-0002">3D-structure</keyword>
<keyword id="KW-0067">ATP-binding</keyword>
<keyword id="KW-0324">Glycolysis</keyword>
<keyword id="KW-0418">Kinase</keyword>
<keyword id="KW-0460">Magnesium</keyword>
<keyword id="KW-0479">Metal-binding</keyword>
<keyword id="KW-0547">Nucleotide-binding</keyword>
<keyword id="KW-0630">Potassium</keyword>
<keyword id="KW-0670">Pyruvate</keyword>
<keyword id="KW-0808">Transferase</keyword>
<name>KPYK_LEIME</name>
<proteinExistence type="evidence at protein level"/>
<sequence>MSQLAHNLTLSIFDPVANYRAARIICTIGPSTQSVEALKGLIQSGMSVARMNFSHGSHEYHQTTINNVRQAAAELGVNIAIALDTKGPEIRTGQFVGGDAVMERGATCYVTTDPAFADKGTKDKFYIDYQNLSKVVRPGNYIYIDDGILILQVQSHEDEQTLECTVTNSHTISDRRGVNLPGCDVDLPAVSAKDRVDLQFGVEQGVDMIFASFIRSAEQVGDVRKALGPKGRDIMIICKIENHQGVQNIDSIIEESDGIMVARGDLGVEIPAEKVVVAQKILISKCNVAGKPVICATQMLESMTYNPRPTRAEVSDVANAVFNGADCVMLSGETAKGKYPNEVVQYMARICLEAQSALNEYVFFNSIKKLQHIPMSADEAVCSSAVNSVYETKAKAMVVLSNTGRSARLVAKYRPNCPIVCVTTRLQTCRQLNITQGVESVFFDADKLGHDEGKEHRVAAGVEFAKSKGYVQTGDYCVVIHADHKVKGYANQTRILLVE</sequence>
<organism>
    <name type="scientific">Leishmania mexicana</name>
    <dbReference type="NCBI Taxonomy" id="5665"/>
    <lineage>
        <taxon>Eukaryota</taxon>
        <taxon>Discoba</taxon>
        <taxon>Euglenozoa</taxon>
        <taxon>Kinetoplastea</taxon>
        <taxon>Metakinetoplastina</taxon>
        <taxon>Trypanosomatida</taxon>
        <taxon>Trypanosomatidae</taxon>
        <taxon>Leishmaniinae</taxon>
        <taxon>Leishmania</taxon>
    </lineage>
</organism>
<reference key="1">
    <citation type="journal article" date="1994" name="Mol. Biochem. Parasitol.">
        <title>Pyruvate kinase of Leishmania mexicana mexicana. Cloning and analysis of the gene, overexpression in Escherichia coli and characterization of the enzyme.</title>
        <authorList>
            <person name="Ernest I."/>
            <person name="Callens M."/>
            <person name="Opperdoes F.R."/>
            <person name="Michels P.A.M."/>
        </authorList>
    </citation>
    <scope>NUCLEOTIDE SEQUENCE [GENOMIC DNA]</scope>
</reference>
<reference key="2">
    <citation type="submission" date="2010-03" db="EMBL/GenBank/DDBJ databases">
        <authorList>
            <person name="Michels P.A.M."/>
        </authorList>
    </citation>
    <scope>SEQUENCE REVISION TO SER-383; TYR-390; ARG-405 AND SER-406</scope>
</reference>
<reference key="3">
    <citation type="journal article" date="1999" name="J. Mol. Biol.">
        <title>The structure of pyruvate kinase from Leishmania mexicana reveals details of the allosteric transition and unusual effector specificity.</title>
        <authorList>
            <person name="Rigden D.J."/>
            <person name="Phillips S.E.V."/>
            <person name="Michels P.A.M."/>
            <person name="Fothergill-Gilmore L.A."/>
        </authorList>
    </citation>
    <scope>X-RAY CRYSTALLOGRAPHY (2.35 ANGSTROMS)</scope>
    <source>
        <strain>MHOM/BZ/84/BEL46</strain>
    </source>
</reference>
<gene>
    <name type="primary">PYK</name>
</gene>
<feature type="chain" id="PRO_0000112102" description="Pyruvate kinase">
    <location>
        <begin position="1"/>
        <end position="499"/>
    </location>
</feature>
<feature type="binding site" evidence="1">
    <location>
        <position position="50"/>
    </location>
    <ligand>
        <name>substrate</name>
    </ligand>
</feature>
<feature type="binding site" evidence="2">
    <location>
        <begin position="52"/>
        <end position="55"/>
    </location>
    <ligand>
        <name>ATP</name>
        <dbReference type="ChEBI" id="CHEBI:30616"/>
    </ligand>
</feature>
<feature type="binding site" evidence="1">
    <location>
        <position position="52"/>
    </location>
    <ligand>
        <name>K(+)</name>
        <dbReference type="ChEBI" id="CHEBI:29103"/>
    </ligand>
</feature>
<feature type="binding site" evidence="1">
    <location>
        <position position="54"/>
    </location>
    <ligand>
        <name>K(+)</name>
        <dbReference type="ChEBI" id="CHEBI:29103"/>
    </ligand>
</feature>
<feature type="binding site" evidence="1">
    <location>
        <position position="84"/>
    </location>
    <ligand>
        <name>K(+)</name>
        <dbReference type="ChEBI" id="CHEBI:29103"/>
    </ligand>
</feature>
<feature type="binding site" evidence="1">
    <location>
        <position position="85"/>
    </location>
    <ligand>
        <name>K(+)</name>
        <dbReference type="ChEBI" id="CHEBI:29103"/>
    </ligand>
</feature>
<feature type="binding site" evidence="2">
    <location>
        <position position="91"/>
    </location>
    <ligand>
        <name>ATP</name>
        <dbReference type="ChEBI" id="CHEBI:30616"/>
    </ligand>
</feature>
<feature type="binding site" evidence="1">
    <location>
        <position position="241"/>
    </location>
    <ligand>
        <name>Mg(2+)</name>
        <dbReference type="ChEBI" id="CHEBI:18420"/>
    </ligand>
</feature>
<feature type="binding site" evidence="1">
    <location>
        <position position="264"/>
    </location>
    <ligand>
        <name>substrate</name>
    </ligand>
</feature>
<feature type="binding site" evidence="1">
    <location>
        <position position="265"/>
    </location>
    <ligand>
        <name>Mg(2+)</name>
        <dbReference type="ChEBI" id="CHEBI:18420"/>
    </ligand>
</feature>
<feature type="binding site" evidence="1">
    <location>
        <position position="265"/>
    </location>
    <ligand>
        <name>substrate</name>
    </ligand>
</feature>
<feature type="binding site" evidence="1">
    <location>
        <position position="297"/>
    </location>
    <ligand>
        <name>substrate</name>
    </ligand>
</feature>
<feature type="site" description="Transition state stabilizer">
    <location>
        <position position="239"/>
    </location>
</feature>
<feature type="helix" evidence="6">
    <location>
        <begin position="3"/>
        <end position="8"/>
    </location>
</feature>
<feature type="strand" evidence="5">
    <location>
        <begin position="18"/>
        <end position="20"/>
    </location>
</feature>
<feature type="strand" evidence="6">
    <location>
        <begin position="22"/>
        <end position="29"/>
    </location>
</feature>
<feature type="turn" evidence="6">
    <location>
        <begin position="30"/>
        <end position="32"/>
    </location>
</feature>
<feature type="helix" evidence="6">
    <location>
        <begin position="35"/>
        <end position="44"/>
    </location>
</feature>
<feature type="strand" evidence="6">
    <location>
        <begin position="46"/>
        <end position="52"/>
    </location>
</feature>
<feature type="helix" evidence="6">
    <location>
        <begin position="58"/>
        <end position="75"/>
    </location>
</feature>
<feature type="strand" evidence="6">
    <location>
        <begin position="80"/>
        <end position="84"/>
    </location>
</feature>
<feature type="strand" evidence="4">
    <location>
        <begin position="90"/>
        <end position="92"/>
    </location>
</feature>
<feature type="helix" evidence="6">
    <location>
        <begin position="96"/>
        <end position="98"/>
    </location>
</feature>
<feature type="strand" evidence="6">
    <location>
        <begin position="99"/>
        <end position="102"/>
    </location>
</feature>
<feature type="strand" evidence="6">
    <location>
        <begin position="107"/>
        <end position="111"/>
    </location>
</feature>
<feature type="helix" evidence="6">
    <location>
        <begin position="114"/>
        <end position="116"/>
    </location>
</feature>
<feature type="strand" evidence="7">
    <location>
        <begin position="117"/>
        <end position="120"/>
    </location>
</feature>
<feature type="strand" evidence="6">
    <location>
        <begin position="122"/>
        <end position="128"/>
    </location>
</feature>
<feature type="helix" evidence="6">
    <location>
        <begin position="132"/>
        <end position="135"/>
    </location>
</feature>
<feature type="strand" evidence="6">
    <location>
        <begin position="141"/>
        <end position="144"/>
    </location>
</feature>
<feature type="turn" evidence="6">
    <location>
        <begin position="145"/>
        <end position="148"/>
    </location>
</feature>
<feature type="strand" evidence="6">
    <location>
        <begin position="149"/>
        <end position="158"/>
    </location>
</feature>
<feature type="strand" evidence="6">
    <location>
        <begin position="161"/>
        <end position="166"/>
    </location>
</feature>
<feature type="strand" evidence="6">
    <location>
        <begin position="170"/>
        <end position="173"/>
    </location>
</feature>
<feature type="strand" evidence="6">
    <location>
        <begin position="177"/>
        <end position="179"/>
    </location>
</feature>
<feature type="helix" evidence="6">
    <location>
        <begin position="192"/>
        <end position="203"/>
    </location>
</feature>
<feature type="strand" evidence="6">
    <location>
        <begin position="207"/>
        <end position="211"/>
    </location>
</feature>
<feature type="helix" evidence="6">
    <location>
        <begin position="217"/>
        <end position="227"/>
    </location>
</feature>
<feature type="helix" evidence="6">
    <location>
        <begin position="229"/>
        <end position="231"/>
    </location>
</feature>
<feature type="strand" evidence="6">
    <location>
        <begin position="234"/>
        <end position="240"/>
    </location>
</feature>
<feature type="helix" evidence="6">
    <location>
        <begin position="243"/>
        <end position="247"/>
    </location>
</feature>
<feature type="helix" evidence="6">
    <location>
        <begin position="249"/>
        <end position="255"/>
    </location>
</feature>
<feature type="strand" evidence="6">
    <location>
        <begin position="256"/>
        <end position="262"/>
    </location>
</feature>
<feature type="helix" evidence="6">
    <location>
        <begin position="263"/>
        <end position="269"/>
    </location>
</feature>
<feature type="helix" evidence="6">
    <location>
        <begin position="272"/>
        <end position="289"/>
    </location>
</feature>
<feature type="strand" evidence="6">
    <location>
        <begin position="293"/>
        <end position="300"/>
    </location>
</feature>
<feature type="helix" evidence="6">
    <location>
        <begin position="301"/>
        <end position="304"/>
    </location>
</feature>
<feature type="strand" evidence="6">
    <location>
        <begin position="306"/>
        <end position="308"/>
    </location>
</feature>
<feature type="helix" evidence="6">
    <location>
        <begin position="311"/>
        <end position="323"/>
    </location>
</feature>
<feature type="strand" evidence="6">
    <location>
        <begin position="326"/>
        <end position="331"/>
    </location>
</feature>
<feature type="helix" evidence="6">
    <location>
        <begin position="332"/>
        <end position="335"/>
    </location>
</feature>
<feature type="helix" evidence="6">
    <location>
        <begin position="340"/>
        <end position="357"/>
    </location>
</feature>
<feature type="helix" evidence="6">
    <location>
        <begin position="360"/>
        <end position="369"/>
    </location>
</feature>
<feature type="helix" evidence="6">
    <location>
        <begin position="377"/>
        <end position="392"/>
    </location>
</feature>
<feature type="strand" evidence="6">
    <location>
        <begin position="395"/>
        <end position="400"/>
    </location>
</feature>
<feature type="strand" evidence="6">
    <location>
        <begin position="402"/>
        <end position="404"/>
    </location>
</feature>
<feature type="helix" evidence="6">
    <location>
        <begin position="405"/>
        <end position="412"/>
    </location>
</feature>
<feature type="strand" evidence="6">
    <location>
        <begin position="419"/>
        <end position="424"/>
    </location>
</feature>
<feature type="helix" evidence="6">
    <location>
        <begin position="426"/>
        <end position="431"/>
    </location>
</feature>
<feature type="helix" evidence="6">
    <location>
        <begin position="432"/>
        <end position="434"/>
    </location>
</feature>
<feature type="strand" evidence="6">
    <location>
        <begin position="438"/>
        <end position="442"/>
    </location>
</feature>
<feature type="helix" evidence="6">
    <location>
        <begin position="445"/>
        <end position="448"/>
    </location>
</feature>
<feature type="helix" evidence="6">
    <location>
        <begin position="455"/>
        <end position="467"/>
    </location>
</feature>
<feature type="strand" evidence="6">
    <location>
        <begin position="476"/>
        <end position="482"/>
    </location>
</feature>
<feature type="strand" evidence="4">
    <location>
        <begin position="485"/>
        <end position="489"/>
    </location>
</feature>
<feature type="strand" evidence="6">
    <location>
        <begin position="491"/>
        <end position="497"/>
    </location>
</feature>
<protein>
    <recommendedName>
        <fullName>Pyruvate kinase</fullName>
        <shortName>PK</shortName>
        <ecNumber>2.7.1.40</ecNumber>
    </recommendedName>
</protein>
<accession>Q27686</accession>
<evidence type="ECO:0000250" key="1"/>
<evidence type="ECO:0000250" key="2">
    <source>
        <dbReference type="UniProtKB" id="P14618"/>
    </source>
</evidence>
<evidence type="ECO:0000305" key="3"/>
<evidence type="ECO:0007829" key="4">
    <source>
        <dbReference type="PDB" id="1PKL"/>
    </source>
</evidence>
<evidence type="ECO:0007829" key="5">
    <source>
        <dbReference type="PDB" id="3E0W"/>
    </source>
</evidence>
<evidence type="ECO:0007829" key="6">
    <source>
        <dbReference type="PDB" id="3HQN"/>
    </source>
</evidence>
<evidence type="ECO:0007829" key="7">
    <source>
        <dbReference type="PDB" id="3SRK"/>
    </source>
</evidence>